<proteinExistence type="inferred from homology"/>
<name>Y945_BACCQ</name>
<feature type="chain" id="PRO_1000185139" description="UPF0342 protein BCQ_0945">
    <location>
        <begin position="1"/>
        <end position="118"/>
    </location>
</feature>
<evidence type="ECO:0000255" key="1">
    <source>
        <dbReference type="HAMAP-Rule" id="MF_01526"/>
    </source>
</evidence>
<gene>
    <name type="ordered locus">BCQ_0945</name>
</gene>
<accession>B9IRA0</accession>
<comment type="similarity">
    <text evidence="1">Belongs to the UPF0342 family.</text>
</comment>
<sequence length="118" mass="13564">MTKNIHDVAYELQKAIAENDDFKTLKESYAAVQADAASKNLFDEFRTMQLSLQQKMMQGQEITEEDNQQAQEVVVRIQQDAKITKLMETEQRLNVVIGDVNKIIMKPLEELYSAQQQA</sequence>
<reference key="1">
    <citation type="journal article" date="2009" name="J. Bacteriol.">
        <title>Complete genome sequence of the extremophilic Bacillus cereus strain Q1 with industrial applications.</title>
        <authorList>
            <person name="Xiong Z."/>
            <person name="Jiang Y."/>
            <person name="Qi D."/>
            <person name="Lu H."/>
            <person name="Yang F."/>
            <person name="Yang J."/>
            <person name="Chen L."/>
            <person name="Sun L."/>
            <person name="Xu X."/>
            <person name="Xue Y."/>
            <person name="Zhu Y."/>
            <person name="Jin Q."/>
        </authorList>
    </citation>
    <scope>NUCLEOTIDE SEQUENCE [LARGE SCALE GENOMIC DNA]</scope>
    <source>
        <strain>Q1</strain>
    </source>
</reference>
<organism>
    <name type="scientific">Bacillus cereus (strain Q1)</name>
    <dbReference type="NCBI Taxonomy" id="361100"/>
    <lineage>
        <taxon>Bacteria</taxon>
        <taxon>Bacillati</taxon>
        <taxon>Bacillota</taxon>
        <taxon>Bacilli</taxon>
        <taxon>Bacillales</taxon>
        <taxon>Bacillaceae</taxon>
        <taxon>Bacillus</taxon>
        <taxon>Bacillus cereus group</taxon>
    </lineage>
</organism>
<dbReference type="EMBL" id="CP000227">
    <property type="protein sequence ID" value="ACM11375.1"/>
    <property type="molecule type" value="Genomic_DNA"/>
</dbReference>
<dbReference type="SMR" id="B9IRA0"/>
<dbReference type="KEGG" id="bcq:BCQ_0945"/>
<dbReference type="HOGENOM" id="CLU_140243_3_0_9"/>
<dbReference type="Proteomes" id="UP000000441">
    <property type="component" value="Chromosome"/>
</dbReference>
<dbReference type="Gene3D" id="1.20.1500.10">
    <property type="entry name" value="YheA/YmcA-like"/>
    <property type="match status" value="1"/>
</dbReference>
<dbReference type="HAMAP" id="MF_01526">
    <property type="entry name" value="UPF0342"/>
    <property type="match status" value="1"/>
</dbReference>
<dbReference type="InterPro" id="IPR010368">
    <property type="entry name" value="Com_YlbF"/>
</dbReference>
<dbReference type="InterPro" id="IPR023378">
    <property type="entry name" value="YheA/YmcA-like_dom_sf"/>
</dbReference>
<dbReference type="NCBIfam" id="NF010211">
    <property type="entry name" value="PRK13676.1-4"/>
    <property type="match status" value="1"/>
</dbReference>
<dbReference type="Pfam" id="PF06133">
    <property type="entry name" value="Com_YlbF"/>
    <property type="match status" value="1"/>
</dbReference>
<dbReference type="SUPFAM" id="SSF158622">
    <property type="entry name" value="YheA/YmcA-like"/>
    <property type="match status" value="1"/>
</dbReference>
<protein>
    <recommendedName>
        <fullName evidence="1">UPF0342 protein BCQ_0945</fullName>
    </recommendedName>
</protein>